<geneLocation type="plasmid">
    <name>sym pRP2JI</name>
</geneLocation>
<feature type="chain" id="PRO_0000087138" description="Exopolysaccharide production repressor protein">
    <location>
        <begin position="1"/>
        <end position="86"/>
    </location>
</feature>
<feature type="transmembrane region" description="Helical" evidence="1">
    <location>
        <begin position="18"/>
        <end position="38"/>
    </location>
</feature>
<feature type="region of interest" description="Disordered" evidence="2">
    <location>
        <begin position="44"/>
        <end position="86"/>
    </location>
</feature>
<feature type="compositionally biased region" description="Basic and acidic residues" evidence="2">
    <location>
        <begin position="61"/>
        <end position="70"/>
    </location>
</feature>
<evidence type="ECO:0000255" key="1"/>
<evidence type="ECO:0000256" key="2">
    <source>
        <dbReference type="SAM" id="MobiDB-lite"/>
    </source>
</evidence>
<evidence type="ECO:0000305" key="3"/>
<comment type="function">
    <text>Inhibition of exopolysaccharide synthesis (EPS) and nodulation ability (NOD).</text>
</comment>
<comment type="pathway">
    <text>Glycan metabolism; exopolysaccharide biosynthesis.</text>
</comment>
<comment type="subcellular location">
    <subcellularLocation>
        <location evidence="3">Cell membrane</location>
        <topology evidence="3">Single-pass membrane protein</topology>
    </subcellularLocation>
</comment>
<name>EXOX_RHILP</name>
<proteinExistence type="predicted"/>
<gene>
    <name type="primary">exoX</name>
    <name type="synonym">psi</name>
    <name type="synonym">psiA</name>
</gene>
<reference key="1">
    <citation type="journal article" date="1987" name="Mol. Gen. Genet.">
        <title>Sequence of psi, a gene on the symbiotic plasmid of Rhizobium phaseoli which inhibits exopolysaccharide synthesis and nodulation and demonstration that its transcription is inhibited by psr, another gene on the symbiotic plasmid.</title>
        <authorList>
            <person name="Borthakur D."/>
            <person name="Johnston A.W.B."/>
        </authorList>
    </citation>
    <scope>NUCLEOTIDE SEQUENCE [GENOMIC DNA]</scope>
</reference>
<reference key="2">
    <citation type="journal article" date="1994" name="Microbiology">
        <title>The psi operon of Rhizobium leguminosarum biovar phaseoli: identification of two genes whose products are located at the bacterial cell surface.</title>
        <authorList>
            <person name="Mimmack M.L."/>
            <person name="Borthakur D."/>
            <person name="Jones M.A."/>
            <person name="Downie J.A."/>
            <person name="Johnston A.W."/>
        </authorList>
    </citation>
    <scope>NUCLEOTIDE SEQUENCE [GENOMIC DNA]</scope>
    <source>
        <strain>8401</strain>
    </source>
</reference>
<sequence length="86" mass="10026">MHQRCFGLRASLSIFKAFAVTLAASVFLQVVYFLSLLFMSFRPTRESDRSIHSGTRQADQPQKRDRDKTEQSNVPKLDPRRKRRTP</sequence>
<dbReference type="EMBL" id="X05329">
    <property type="protein sequence ID" value="CAA28946.1"/>
    <property type="molecule type" value="Genomic_DNA"/>
</dbReference>
<dbReference type="EMBL" id="L26581">
    <property type="status" value="NOT_ANNOTATED_CDS"/>
    <property type="molecule type" value="Genomic_DNA"/>
</dbReference>
<dbReference type="SMR" id="P14801"/>
<dbReference type="UniPathway" id="UPA00631"/>
<dbReference type="GO" id="GO:0005886">
    <property type="term" value="C:plasma membrane"/>
    <property type="evidence" value="ECO:0007669"/>
    <property type="project" value="UniProtKB-SubCell"/>
</dbReference>
<dbReference type="GO" id="GO:0000271">
    <property type="term" value="P:polysaccharide biosynthetic process"/>
    <property type="evidence" value="ECO:0007669"/>
    <property type="project" value="UniProtKB-KW"/>
</dbReference>
<accession>P14801</accession>
<protein>
    <recommendedName>
        <fullName>Exopolysaccharide production repressor protein</fullName>
    </recommendedName>
    <alternativeName>
        <fullName>Polysaccharide inhibition protein</fullName>
    </alternativeName>
</protein>
<organism>
    <name type="scientific">Rhizobium leguminosarum bv. phaseoli</name>
    <dbReference type="NCBI Taxonomy" id="385"/>
    <lineage>
        <taxon>Bacteria</taxon>
        <taxon>Pseudomonadati</taxon>
        <taxon>Pseudomonadota</taxon>
        <taxon>Alphaproteobacteria</taxon>
        <taxon>Hyphomicrobiales</taxon>
        <taxon>Rhizobiaceae</taxon>
        <taxon>Rhizobium/Agrobacterium group</taxon>
        <taxon>Rhizobium</taxon>
    </lineage>
</organism>
<keyword id="KW-1003">Cell membrane</keyword>
<keyword id="KW-0270">Exopolysaccharide synthesis</keyword>
<keyword id="KW-0472">Membrane</keyword>
<keyword id="KW-0536">Nodulation</keyword>
<keyword id="KW-0614">Plasmid</keyword>
<keyword id="KW-0812">Transmembrane</keyword>
<keyword id="KW-1133">Transmembrane helix</keyword>